<gene>
    <name evidence="6" type="primary">CYP71AZ6</name>
</gene>
<organism>
    <name type="scientific">Pastinaca sativa</name>
    <name type="common">Wild parsnip</name>
    <name type="synonym">Anethum pastinaca</name>
    <dbReference type="NCBI Taxonomy" id="4041"/>
    <lineage>
        <taxon>Eukaryota</taxon>
        <taxon>Viridiplantae</taxon>
        <taxon>Streptophyta</taxon>
        <taxon>Embryophyta</taxon>
        <taxon>Tracheophyta</taxon>
        <taxon>Spermatophyta</taxon>
        <taxon>Magnoliopsida</taxon>
        <taxon>eudicotyledons</taxon>
        <taxon>Gunneridae</taxon>
        <taxon>Pentapetalae</taxon>
        <taxon>asterids</taxon>
        <taxon>campanulids</taxon>
        <taxon>Apiales</taxon>
        <taxon>Apiaceae</taxon>
        <taxon>Apioideae</taxon>
        <taxon>apioid superclade</taxon>
        <taxon>Tordylieae</taxon>
        <taxon>Tordyliinae</taxon>
        <taxon>Pastinaca</taxon>
    </lineage>
</organism>
<name>C71Z6_PASSA</name>
<keyword id="KW-0256">Endoplasmic reticulum</keyword>
<keyword id="KW-0349">Heme</keyword>
<keyword id="KW-0408">Iron</keyword>
<keyword id="KW-0472">Membrane</keyword>
<keyword id="KW-0479">Metal-binding</keyword>
<keyword id="KW-0492">Microsome</keyword>
<keyword id="KW-0503">Monooxygenase</keyword>
<keyword id="KW-0560">Oxidoreductase</keyword>
<keyword id="KW-0812">Transmembrane</keyword>
<keyword id="KW-1133">Transmembrane helix</keyword>
<protein>
    <recommendedName>
        <fullName evidence="6">5-OH-xanthotoxin synthase</fullName>
        <ecNumber evidence="5">1.14.14.-</ecNumber>
    </recommendedName>
    <alternativeName>
        <fullName evidence="6">Cytochrome P450 CYP71AZ6</fullName>
    </alternativeName>
</protein>
<sequence length="506" mass="57965">MDPVVIFLVLAFPIASVYLLFYHKKRVGGLSSPPGPRGLPFIGNFFQLYKAPCIHEYLWNLSKKYGSLMTLHMGSVPILVVSSPKMAKEVLKTQDLIYCSRPRMTGMRKLSYDGLDVAFSTYSEHWRHVRKLCTLELFTQKRAQLCFRLVHEQEVSRMIVRLSETAAASKDVNAFECFSNLSTSIISRVAFGKRYDEDGIGKERLQRMLSEIDAMLAGIFVSDFFPMFGWIDRLSGMRARLDRTFKEMDMFYEELIDEHLKPNRPESPTEDLIDVMLKNKGSSCLLTMDSIKAILLNVFNGGTGTSATLLVWAMTALMRNQGVMKKAQEDIRRVIGRKGNVDEDDIQNLSYLRAVVKETMRLYPTGPLLIPRETMESSIIGEDKDHMYMIKPKTLVYVSMWAIGRDPEIWKNPMEFVPERFLERPDLNYKGQQFEYIPFGAGRRICAGIHLGVTTVELALANLLYTFDWEPPAGTRFEDIDDETLNGLTLQKKNALYIRPKKYICP</sequence>
<comment type="function">
    <text evidence="5 6">Involved in the biosynthesis of coumarins and furanocoumarins (FCs), natural products required for defense responses against attacks by predators with potential medical and agroindustrial usages such as anticoagulant, rodenticide and artificial vanilla substitutes (PubMed:29971079). Catalyzes the conversion of xanthotoxin into 5-hydroxyxanthotoxin (PubMed:29971079).</text>
</comment>
<comment type="catalytic activity">
    <reaction evidence="5">
        <text>xanthotoxin + reduced [NADPH--hemoprotein reductase] + O2 = 5-hydroxyxanthotoxin + oxidized [NADPH--hemoprotein reductase] + H2O + 2 H(+)</text>
        <dbReference type="Rhea" id="RHEA:58064"/>
        <dbReference type="Rhea" id="RHEA-COMP:11964"/>
        <dbReference type="Rhea" id="RHEA-COMP:11965"/>
        <dbReference type="ChEBI" id="CHEBI:15377"/>
        <dbReference type="ChEBI" id="CHEBI:15378"/>
        <dbReference type="ChEBI" id="CHEBI:15379"/>
        <dbReference type="ChEBI" id="CHEBI:18358"/>
        <dbReference type="ChEBI" id="CHEBI:57618"/>
        <dbReference type="ChEBI" id="CHEBI:58210"/>
        <dbReference type="ChEBI" id="CHEBI:78326"/>
    </reaction>
    <physiologicalReaction direction="left-to-right" evidence="5">
        <dbReference type="Rhea" id="RHEA:58065"/>
    </physiologicalReaction>
</comment>
<comment type="cofactor">
    <cofactor evidence="3">
        <name>heme</name>
        <dbReference type="ChEBI" id="CHEBI:30413"/>
    </cofactor>
</comment>
<comment type="biophysicochemical properties">
    <kinetics>
        <KM evidence="5">6.3 uM for xanthotoxin (at pH 7.4 and 28 degrees Celsius)</KM>
    </kinetics>
</comment>
<comment type="pathway">
    <text evidence="5">Secondary metabolite biosynthesis.</text>
</comment>
<comment type="subcellular location">
    <subcellularLocation>
        <location evidence="2">Microsome membrane</location>
        <topology evidence="4">Single-pass membrane protein</topology>
    </subcellularLocation>
</comment>
<comment type="induction">
    <text evidence="5">Accumulates in roots after wounding.</text>
</comment>
<comment type="similarity">
    <text evidence="7">Belongs to the cytochrome P450 family.</text>
</comment>
<proteinExistence type="evidence at protein level"/>
<evidence type="ECO:0000250" key="1">
    <source>
        <dbReference type="UniProtKB" id="A0A2Z5D850"/>
    </source>
</evidence>
<evidence type="ECO:0000250" key="2">
    <source>
        <dbReference type="UniProtKB" id="Q6QNI4"/>
    </source>
</evidence>
<evidence type="ECO:0000250" key="3">
    <source>
        <dbReference type="UniProtKB" id="Q94IP1"/>
    </source>
</evidence>
<evidence type="ECO:0000255" key="4"/>
<evidence type="ECO:0000269" key="5">
    <source>
    </source>
</evidence>
<evidence type="ECO:0000303" key="6">
    <source>
    </source>
</evidence>
<evidence type="ECO:0000305" key="7"/>
<reference key="1">
    <citation type="journal article" date="2018" name="Front. Plant Sci.">
        <title>The CYP71AZ P450 subfamily: A driving factor for the diversification of coumarin biosynthesis in apiaceous plants.</title>
        <authorList>
            <person name="Krieger C."/>
            <person name="Roselli S."/>
            <person name="Kellner-Thielmann S."/>
            <person name="Galati G."/>
            <person name="Schneider B."/>
            <person name="Grosjean J."/>
            <person name="Olry A."/>
            <person name="Ritchie D."/>
            <person name="Matern U."/>
            <person name="Bourgaud F."/>
            <person name="Hehn A."/>
        </authorList>
    </citation>
    <scope>NUCLEOTIDE SEQUENCE [MRNA]</scope>
    <scope>FUNCTION</scope>
    <scope>CATALYTIC ACTIVITY</scope>
    <scope>BIOPHYSICOCHEMICAL PROPERTIES</scope>
    <scope>REVIEW</scope>
    <scope>PATHWAY</scope>
    <scope>INDUCTION BY WOUNDING</scope>
    <source>
        <strain>cv. Demi-long de Guernesey</strain>
    </source>
</reference>
<feature type="chain" id="PRO_0000454521" description="5-OH-xanthotoxin synthase">
    <location>
        <begin position="1"/>
        <end position="506"/>
    </location>
</feature>
<feature type="transmembrane region" description="Helical" evidence="4">
    <location>
        <begin position="3"/>
        <end position="23"/>
    </location>
</feature>
<feature type="region of interest" description="Substrate specificity" evidence="1">
    <location>
        <begin position="365"/>
        <end position="370"/>
    </location>
</feature>
<feature type="binding site" description="axial binding residue" evidence="3">
    <location>
        <position position="446"/>
    </location>
    <ligand>
        <name>heme</name>
        <dbReference type="ChEBI" id="CHEBI:30413"/>
    </ligand>
    <ligandPart>
        <name>Fe</name>
        <dbReference type="ChEBI" id="CHEBI:18248"/>
    </ligandPart>
</feature>
<feature type="site" description="Substrate specificity" evidence="1">
    <location>
        <position position="118"/>
    </location>
</feature>
<feature type="site" description="Substrate specificity" evidence="1">
    <location>
        <position position="301"/>
    </location>
</feature>
<feature type="site" description="Substrate specificity" evidence="1">
    <location>
        <position position="305"/>
    </location>
</feature>
<accession>A0A2Z5D852</accession>
<dbReference type="EC" id="1.14.14.-" evidence="5"/>
<dbReference type="EMBL" id="MH000221">
    <property type="protein sequence ID" value="AXB38863.1"/>
    <property type="molecule type" value="mRNA"/>
</dbReference>
<dbReference type="SMR" id="A0A2Z5D852"/>
<dbReference type="KEGG" id="ag:AXB38863"/>
<dbReference type="GO" id="GO:0005783">
    <property type="term" value="C:endoplasmic reticulum"/>
    <property type="evidence" value="ECO:0007669"/>
    <property type="project" value="UniProtKB-KW"/>
</dbReference>
<dbReference type="GO" id="GO:0016020">
    <property type="term" value="C:membrane"/>
    <property type="evidence" value="ECO:0007669"/>
    <property type="project" value="UniProtKB-KW"/>
</dbReference>
<dbReference type="GO" id="GO:0020037">
    <property type="term" value="F:heme binding"/>
    <property type="evidence" value="ECO:0007669"/>
    <property type="project" value="InterPro"/>
</dbReference>
<dbReference type="GO" id="GO:0005506">
    <property type="term" value="F:iron ion binding"/>
    <property type="evidence" value="ECO:0007669"/>
    <property type="project" value="InterPro"/>
</dbReference>
<dbReference type="GO" id="GO:0004497">
    <property type="term" value="F:monooxygenase activity"/>
    <property type="evidence" value="ECO:0007669"/>
    <property type="project" value="UniProtKB-KW"/>
</dbReference>
<dbReference type="GO" id="GO:0016705">
    <property type="term" value="F:oxidoreductase activity, acting on paired donors, with incorporation or reduction of molecular oxygen"/>
    <property type="evidence" value="ECO:0007669"/>
    <property type="project" value="InterPro"/>
</dbReference>
<dbReference type="GO" id="GO:0009805">
    <property type="term" value="P:coumarin biosynthetic process"/>
    <property type="evidence" value="ECO:0000314"/>
    <property type="project" value="UniProtKB"/>
</dbReference>
<dbReference type="GO" id="GO:0009611">
    <property type="term" value="P:response to wounding"/>
    <property type="evidence" value="ECO:0000270"/>
    <property type="project" value="UniProtKB"/>
</dbReference>
<dbReference type="CDD" id="cd11072">
    <property type="entry name" value="CYP71-like"/>
    <property type="match status" value="1"/>
</dbReference>
<dbReference type="FunFam" id="1.10.630.10:FF:000011">
    <property type="entry name" value="Cytochrome P450 83B1"/>
    <property type="match status" value="1"/>
</dbReference>
<dbReference type="Gene3D" id="1.10.630.10">
    <property type="entry name" value="Cytochrome P450"/>
    <property type="match status" value="1"/>
</dbReference>
<dbReference type="InterPro" id="IPR001128">
    <property type="entry name" value="Cyt_P450"/>
</dbReference>
<dbReference type="InterPro" id="IPR017972">
    <property type="entry name" value="Cyt_P450_CS"/>
</dbReference>
<dbReference type="InterPro" id="IPR002401">
    <property type="entry name" value="Cyt_P450_E_grp-I"/>
</dbReference>
<dbReference type="InterPro" id="IPR036396">
    <property type="entry name" value="Cyt_P450_sf"/>
</dbReference>
<dbReference type="PANTHER" id="PTHR47955:SF22">
    <property type="entry name" value="CYTOCHROME P450 83B1-LIKE"/>
    <property type="match status" value="1"/>
</dbReference>
<dbReference type="PANTHER" id="PTHR47955">
    <property type="entry name" value="CYTOCHROME P450 FAMILY 71 PROTEIN"/>
    <property type="match status" value="1"/>
</dbReference>
<dbReference type="Pfam" id="PF00067">
    <property type="entry name" value="p450"/>
    <property type="match status" value="1"/>
</dbReference>
<dbReference type="PRINTS" id="PR00463">
    <property type="entry name" value="EP450I"/>
</dbReference>
<dbReference type="PRINTS" id="PR00385">
    <property type="entry name" value="P450"/>
</dbReference>
<dbReference type="SUPFAM" id="SSF48264">
    <property type="entry name" value="Cytochrome P450"/>
    <property type="match status" value="1"/>
</dbReference>
<dbReference type="PROSITE" id="PS00086">
    <property type="entry name" value="CYTOCHROME_P450"/>
    <property type="match status" value="1"/>
</dbReference>